<keyword id="KW-1003">Cell membrane</keyword>
<keyword id="KW-0342">GTP-binding</keyword>
<keyword id="KW-0378">Hydrolase</keyword>
<keyword id="KW-0472">Membrane</keyword>
<keyword id="KW-0547">Nucleotide-binding</keyword>
<keyword id="KW-0648">Protein biosynthesis</keyword>
<gene>
    <name evidence="1" type="primary">lepA</name>
    <name type="ordered locus">EAT1b_0624</name>
</gene>
<comment type="function">
    <text evidence="1">Required for accurate and efficient protein synthesis under certain stress conditions. May act as a fidelity factor of the translation reaction, by catalyzing a one-codon backward translocation of tRNAs on improperly translocated ribosomes. Back-translocation proceeds from a post-translocation (POST) complex to a pre-translocation (PRE) complex, thus giving elongation factor G a second chance to translocate the tRNAs correctly. Binds to ribosomes in a GTP-dependent manner.</text>
</comment>
<comment type="catalytic activity">
    <reaction evidence="1">
        <text>GTP + H2O = GDP + phosphate + H(+)</text>
        <dbReference type="Rhea" id="RHEA:19669"/>
        <dbReference type="ChEBI" id="CHEBI:15377"/>
        <dbReference type="ChEBI" id="CHEBI:15378"/>
        <dbReference type="ChEBI" id="CHEBI:37565"/>
        <dbReference type="ChEBI" id="CHEBI:43474"/>
        <dbReference type="ChEBI" id="CHEBI:58189"/>
        <dbReference type="EC" id="3.6.5.n1"/>
    </reaction>
</comment>
<comment type="subcellular location">
    <subcellularLocation>
        <location evidence="1">Cell membrane</location>
        <topology evidence="1">Peripheral membrane protein</topology>
        <orientation evidence="1">Cytoplasmic side</orientation>
    </subcellularLocation>
</comment>
<comment type="similarity">
    <text evidence="1">Belongs to the TRAFAC class translation factor GTPase superfamily. Classic translation factor GTPase family. LepA subfamily.</text>
</comment>
<sequence length="607" mass="67512">MNKQELENRQKKIRNFSIIAHIDHGKSTLADRILEKTGALTAREMKEQTLDAMDLERERGITIKLNAVKLNYTAKDGEEYILHLIDTPGHVDFTYEVSRSLAACEGAILVVDAAQGIEAQTLANVYLALDNDLEIIPVINKIDLPSADVERVRQEIEDVIGLDASDAVPTSAKAGIGIEEILEQIVELVPPPTGDPSEPLQALIFDSYYDAYRGVVASIRIVNGSVKVGDKVQMMATGKTFEVTDLGVSTPKPISVKELNVGDVGTLSASIKTVGDVRVGDTITLAKNPATSQLPGYRKMNPMVYCGLYPIDAAKYNDLREALEKLQLSDAALEFEPETSQALGFGFRCGFLGMLHMEIIQERIEREFNIDLITTAPSVIYHVTTTSGEVIHVDNPSKMPEQQKVDSIEEPYVKAAVMTPNDYVGAIMELCQKKRGTFIDMQYIDTTRVKITYEIPLSEIVYDFFDQLKSSTKGYASLDYELIGYRQSRLVKMDILLNNEVVDALSFIVHRDFAYERGKVIVEKLKALIPRMQFEVPVQAAVGTKIVARSTIKALRKNVLAKCYGGDISRKRKLLEKQKEGKKRMKMVGSVEVPQEAFMSVLSMDEE</sequence>
<reference key="1">
    <citation type="journal article" date="2011" name="J. Bacteriol.">
        <title>Complete genome sequence of the Thermophilic Bacterium Exiguobacterium sp. AT1b.</title>
        <authorList>
            <person name="Vishnivetskaya T.A."/>
            <person name="Lucas S."/>
            <person name="Copeland A."/>
            <person name="Lapidus A."/>
            <person name="Glavina del Rio T."/>
            <person name="Dalin E."/>
            <person name="Tice H."/>
            <person name="Bruce D.C."/>
            <person name="Goodwin L.A."/>
            <person name="Pitluck S."/>
            <person name="Saunders E."/>
            <person name="Brettin T."/>
            <person name="Detter C."/>
            <person name="Han C."/>
            <person name="Larimer F."/>
            <person name="Land M.L."/>
            <person name="Hauser L.J."/>
            <person name="Kyrpides N.C."/>
            <person name="Ovchinnikova G."/>
            <person name="Kathariou S."/>
            <person name="Ramaley R.F."/>
            <person name="Rodrigues D.F."/>
            <person name="Hendrix C."/>
            <person name="Richardson P."/>
            <person name="Tiedje J.M."/>
        </authorList>
    </citation>
    <scope>NUCLEOTIDE SEQUENCE [LARGE SCALE GENOMIC DNA]</scope>
    <source>
        <strain>ATCC BAA-1283 / AT1b</strain>
    </source>
</reference>
<organism>
    <name type="scientific">Exiguobacterium sp. (strain ATCC BAA-1283 / AT1b)</name>
    <dbReference type="NCBI Taxonomy" id="360911"/>
    <lineage>
        <taxon>Bacteria</taxon>
        <taxon>Bacillati</taxon>
        <taxon>Bacillota</taxon>
        <taxon>Bacilli</taxon>
        <taxon>Bacillales</taxon>
        <taxon>Bacillales Family XII. Incertae Sedis</taxon>
        <taxon>Exiguobacterium</taxon>
    </lineage>
</organism>
<evidence type="ECO:0000255" key="1">
    <source>
        <dbReference type="HAMAP-Rule" id="MF_00071"/>
    </source>
</evidence>
<proteinExistence type="inferred from homology"/>
<name>LEPA_EXISA</name>
<feature type="chain" id="PRO_1000202451" description="Elongation factor 4">
    <location>
        <begin position="1"/>
        <end position="607"/>
    </location>
</feature>
<feature type="domain" description="tr-type G">
    <location>
        <begin position="11"/>
        <end position="193"/>
    </location>
</feature>
<feature type="binding site" evidence="1">
    <location>
        <begin position="23"/>
        <end position="28"/>
    </location>
    <ligand>
        <name>GTP</name>
        <dbReference type="ChEBI" id="CHEBI:37565"/>
    </ligand>
</feature>
<feature type="binding site" evidence="1">
    <location>
        <begin position="140"/>
        <end position="143"/>
    </location>
    <ligand>
        <name>GTP</name>
        <dbReference type="ChEBI" id="CHEBI:37565"/>
    </ligand>
</feature>
<dbReference type="EC" id="3.6.5.n1" evidence="1"/>
<dbReference type="EMBL" id="CP001615">
    <property type="protein sequence ID" value="ACQ69555.1"/>
    <property type="molecule type" value="Genomic_DNA"/>
</dbReference>
<dbReference type="RefSeq" id="WP_012726674.1">
    <property type="nucleotide sequence ID" value="NC_012673.1"/>
</dbReference>
<dbReference type="SMR" id="C4L433"/>
<dbReference type="STRING" id="360911.EAT1b_0624"/>
<dbReference type="GeneID" id="94371761"/>
<dbReference type="KEGG" id="eat:EAT1b_0624"/>
<dbReference type="eggNOG" id="COG0481">
    <property type="taxonomic scope" value="Bacteria"/>
</dbReference>
<dbReference type="HOGENOM" id="CLU_009995_3_3_9"/>
<dbReference type="OrthoDB" id="9804431at2"/>
<dbReference type="Proteomes" id="UP000000716">
    <property type="component" value="Chromosome"/>
</dbReference>
<dbReference type="GO" id="GO:0005886">
    <property type="term" value="C:plasma membrane"/>
    <property type="evidence" value="ECO:0007669"/>
    <property type="project" value="UniProtKB-SubCell"/>
</dbReference>
<dbReference type="GO" id="GO:0005525">
    <property type="term" value="F:GTP binding"/>
    <property type="evidence" value="ECO:0007669"/>
    <property type="project" value="UniProtKB-UniRule"/>
</dbReference>
<dbReference type="GO" id="GO:0003924">
    <property type="term" value="F:GTPase activity"/>
    <property type="evidence" value="ECO:0007669"/>
    <property type="project" value="UniProtKB-UniRule"/>
</dbReference>
<dbReference type="GO" id="GO:0043022">
    <property type="term" value="F:ribosome binding"/>
    <property type="evidence" value="ECO:0007669"/>
    <property type="project" value="UniProtKB-UniRule"/>
</dbReference>
<dbReference type="GO" id="GO:0003746">
    <property type="term" value="F:translation elongation factor activity"/>
    <property type="evidence" value="ECO:0007669"/>
    <property type="project" value="UniProtKB-UniRule"/>
</dbReference>
<dbReference type="GO" id="GO:0045727">
    <property type="term" value="P:positive regulation of translation"/>
    <property type="evidence" value="ECO:0007669"/>
    <property type="project" value="UniProtKB-UniRule"/>
</dbReference>
<dbReference type="CDD" id="cd03699">
    <property type="entry name" value="EF4_II"/>
    <property type="match status" value="1"/>
</dbReference>
<dbReference type="CDD" id="cd16260">
    <property type="entry name" value="EF4_III"/>
    <property type="match status" value="1"/>
</dbReference>
<dbReference type="CDD" id="cd01890">
    <property type="entry name" value="LepA"/>
    <property type="match status" value="1"/>
</dbReference>
<dbReference type="CDD" id="cd03709">
    <property type="entry name" value="lepA_C"/>
    <property type="match status" value="1"/>
</dbReference>
<dbReference type="FunFam" id="3.40.50.300:FF:000078">
    <property type="entry name" value="Elongation factor 4"/>
    <property type="match status" value="1"/>
</dbReference>
<dbReference type="FunFam" id="2.40.30.10:FF:000015">
    <property type="entry name" value="Translation factor GUF1, mitochondrial"/>
    <property type="match status" value="1"/>
</dbReference>
<dbReference type="FunFam" id="3.30.70.240:FF:000007">
    <property type="entry name" value="Translation factor GUF1, mitochondrial"/>
    <property type="match status" value="1"/>
</dbReference>
<dbReference type="FunFam" id="3.30.70.2570:FF:000001">
    <property type="entry name" value="Translation factor GUF1, mitochondrial"/>
    <property type="match status" value="1"/>
</dbReference>
<dbReference type="FunFam" id="3.30.70.870:FF:000004">
    <property type="entry name" value="Translation factor GUF1, mitochondrial"/>
    <property type="match status" value="1"/>
</dbReference>
<dbReference type="Gene3D" id="3.30.70.240">
    <property type="match status" value="1"/>
</dbReference>
<dbReference type="Gene3D" id="3.30.70.2570">
    <property type="entry name" value="Elongation factor 4, C-terminal domain"/>
    <property type="match status" value="1"/>
</dbReference>
<dbReference type="Gene3D" id="3.30.70.870">
    <property type="entry name" value="Elongation Factor G (Translational Gtpase), domain 3"/>
    <property type="match status" value="1"/>
</dbReference>
<dbReference type="Gene3D" id="3.40.50.300">
    <property type="entry name" value="P-loop containing nucleotide triphosphate hydrolases"/>
    <property type="match status" value="1"/>
</dbReference>
<dbReference type="Gene3D" id="2.40.30.10">
    <property type="entry name" value="Translation factors"/>
    <property type="match status" value="1"/>
</dbReference>
<dbReference type="HAMAP" id="MF_00071">
    <property type="entry name" value="LepA"/>
    <property type="match status" value="1"/>
</dbReference>
<dbReference type="InterPro" id="IPR006297">
    <property type="entry name" value="EF-4"/>
</dbReference>
<dbReference type="InterPro" id="IPR035647">
    <property type="entry name" value="EFG_III/V"/>
</dbReference>
<dbReference type="InterPro" id="IPR000640">
    <property type="entry name" value="EFG_V-like"/>
</dbReference>
<dbReference type="InterPro" id="IPR004161">
    <property type="entry name" value="EFTu-like_2"/>
</dbReference>
<dbReference type="InterPro" id="IPR031157">
    <property type="entry name" value="G_TR_CS"/>
</dbReference>
<dbReference type="InterPro" id="IPR038363">
    <property type="entry name" value="LepA_C_sf"/>
</dbReference>
<dbReference type="InterPro" id="IPR013842">
    <property type="entry name" value="LepA_CTD"/>
</dbReference>
<dbReference type="InterPro" id="IPR035654">
    <property type="entry name" value="LepA_IV"/>
</dbReference>
<dbReference type="InterPro" id="IPR027417">
    <property type="entry name" value="P-loop_NTPase"/>
</dbReference>
<dbReference type="InterPro" id="IPR005225">
    <property type="entry name" value="Small_GTP-bd"/>
</dbReference>
<dbReference type="InterPro" id="IPR000795">
    <property type="entry name" value="T_Tr_GTP-bd_dom"/>
</dbReference>
<dbReference type="InterPro" id="IPR009000">
    <property type="entry name" value="Transl_B-barrel_sf"/>
</dbReference>
<dbReference type="NCBIfam" id="TIGR01393">
    <property type="entry name" value="lepA"/>
    <property type="match status" value="1"/>
</dbReference>
<dbReference type="NCBIfam" id="TIGR00231">
    <property type="entry name" value="small_GTP"/>
    <property type="match status" value="1"/>
</dbReference>
<dbReference type="PANTHER" id="PTHR43512:SF4">
    <property type="entry name" value="TRANSLATION FACTOR GUF1 HOMOLOG, CHLOROPLASTIC"/>
    <property type="match status" value="1"/>
</dbReference>
<dbReference type="PANTHER" id="PTHR43512">
    <property type="entry name" value="TRANSLATION FACTOR GUF1-RELATED"/>
    <property type="match status" value="1"/>
</dbReference>
<dbReference type="Pfam" id="PF00679">
    <property type="entry name" value="EFG_C"/>
    <property type="match status" value="1"/>
</dbReference>
<dbReference type="Pfam" id="PF00009">
    <property type="entry name" value="GTP_EFTU"/>
    <property type="match status" value="1"/>
</dbReference>
<dbReference type="Pfam" id="PF03144">
    <property type="entry name" value="GTP_EFTU_D2"/>
    <property type="match status" value="1"/>
</dbReference>
<dbReference type="Pfam" id="PF06421">
    <property type="entry name" value="LepA_C"/>
    <property type="match status" value="1"/>
</dbReference>
<dbReference type="PRINTS" id="PR00315">
    <property type="entry name" value="ELONGATNFCT"/>
</dbReference>
<dbReference type="SMART" id="SM00838">
    <property type="entry name" value="EFG_C"/>
    <property type="match status" value="1"/>
</dbReference>
<dbReference type="SUPFAM" id="SSF54980">
    <property type="entry name" value="EF-G C-terminal domain-like"/>
    <property type="match status" value="2"/>
</dbReference>
<dbReference type="SUPFAM" id="SSF52540">
    <property type="entry name" value="P-loop containing nucleoside triphosphate hydrolases"/>
    <property type="match status" value="1"/>
</dbReference>
<dbReference type="SUPFAM" id="SSF50447">
    <property type="entry name" value="Translation proteins"/>
    <property type="match status" value="1"/>
</dbReference>
<dbReference type="PROSITE" id="PS00301">
    <property type="entry name" value="G_TR_1"/>
    <property type="match status" value="1"/>
</dbReference>
<dbReference type="PROSITE" id="PS51722">
    <property type="entry name" value="G_TR_2"/>
    <property type="match status" value="1"/>
</dbReference>
<protein>
    <recommendedName>
        <fullName evidence="1">Elongation factor 4</fullName>
        <shortName evidence="1">EF-4</shortName>
        <ecNumber evidence="1">3.6.5.n1</ecNumber>
    </recommendedName>
    <alternativeName>
        <fullName evidence="1">Ribosomal back-translocase LepA</fullName>
    </alternativeName>
</protein>
<accession>C4L433</accession>